<dbReference type="EC" id="3.1.26.4" evidence="1"/>
<dbReference type="EMBL" id="CU928145">
    <property type="protein sequence ID" value="CAU96093.1"/>
    <property type="molecule type" value="Genomic_DNA"/>
</dbReference>
<dbReference type="RefSeq" id="WP_000917888.1">
    <property type="nucleotide sequence ID" value="NC_011748.1"/>
</dbReference>
<dbReference type="SMR" id="B7LHC0"/>
<dbReference type="KEGG" id="eck:EC55989_0213"/>
<dbReference type="HOGENOM" id="CLU_030894_6_0_6"/>
<dbReference type="Proteomes" id="UP000000746">
    <property type="component" value="Chromosome"/>
</dbReference>
<dbReference type="GO" id="GO:0005737">
    <property type="term" value="C:cytoplasm"/>
    <property type="evidence" value="ECO:0007669"/>
    <property type="project" value="UniProtKB-SubCell"/>
</dbReference>
<dbReference type="GO" id="GO:0000287">
    <property type="term" value="F:magnesium ion binding"/>
    <property type="evidence" value="ECO:0007669"/>
    <property type="project" value="UniProtKB-UniRule"/>
</dbReference>
<dbReference type="GO" id="GO:0003676">
    <property type="term" value="F:nucleic acid binding"/>
    <property type="evidence" value="ECO:0007669"/>
    <property type="project" value="InterPro"/>
</dbReference>
<dbReference type="GO" id="GO:0004523">
    <property type="term" value="F:RNA-DNA hybrid ribonuclease activity"/>
    <property type="evidence" value="ECO:0007669"/>
    <property type="project" value="UniProtKB-UniRule"/>
</dbReference>
<dbReference type="GO" id="GO:0043137">
    <property type="term" value="P:DNA replication, removal of RNA primer"/>
    <property type="evidence" value="ECO:0007669"/>
    <property type="project" value="TreeGrafter"/>
</dbReference>
<dbReference type="CDD" id="cd09278">
    <property type="entry name" value="RNase_HI_prokaryote_like"/>
    <property type="match status" value="1"/>
</dbReference>
<dbReference type="FunFam" id="3.30.420.10:FF:000008">
    <property type="entry name" value="Ribonuclease H"/>
    <property type="match status" value="1"/>
</dbReference>
<dbReference type="Gene3D" id="3.30.420.10">
    <property type="entry name" value="Ribonuclease H-like superfamily/Ribonuclease H"/>
    <property type="match status" value="1"/>
</dbReference>
<dbReference type="HAMAP" id="MF_00042">
    <property type="entry name" value="RNase_H"/>
    <property type="match status" value="1"/>
</dbReference>
<dbReference type="InterPro" id="IPR050092">
    <property type="entry name" value="RNase_H"/>
</dbReference>
<dbReference type="InterPro" id="IPR012337">
    <property type="entry name" value="RNaseH-like_sf"/>
</dbReference>
<dbReference type="InterPro" id="IPR002156">
    <property type="entry name" value="RNaseH_domain"/>
</dbReference>
<dbReference type="InterPro" id="IPR036397">
    <property type="entry name" value="RNaseH_sf"/>
</dbReference>
<dbReference type="InterPro" id="IPR022892">
    <property type="entry name" value="RNaseHI"/>
</dbReference>
<dbReference type="NCBIfam" id="NF001236">
    <property type="entry name" value="PRK00203.1"/>
    <property type="match status" value="1"/>
</dbReference>
<dbReference type="PANTHER" id="PTHR10642">
    <property type="entry name" value="RIBONUCLEASE H1"/>
    <property type="match status" value="1"/>
</dbReference>
<dbReference type="PANTHER" id="PTHR10642:SF26">
    <property type="entry name" value="RIBONUCLEASE H1"/>
    <property type="match status" value="1"/>
</dbReference>
<dbReference type="Pfam" id="PF00075">
    <property type="entry name" value="RNase_H"/>
    <property type="match status" value="1"/>
</dbReference>
<dbReference type="SUPFAM" id="SSF53098">
    <property type="entry name" value="Ribonuclease H-like"/>
    <property type="match status" value="1"/>
</dbReference>
<dbReference type="PROSITE" id="PS50879">
    <property type="entry name" value="RNASE_H_1"/>
    <property type="match status" value="1"/>
</dbReference>
<organism>
    <name type="scientific">Escherichia coli (strain 55989 / EAEC)</name>
    <dbReference type="NCBI Taxonomy" id="585055"/>
    <lineage>
        <taxon>Bacteria</taxon>
        <taxon>Pseudomonadati</taxon>
        <taxon>Pseudomonadota</taxon>
        <taxon>Gammaproteobacteria</taxon>
        <taxon>Enterobacterales</taxon>
        <taxon>Enterobacteriaceae</taxon>
        <taxon>Escherichia</taxon>
    </lineage>
</organism>
<name>RNH_ECO55</name>
<gene>
    <name evidence="1" type="primary">rnhA</name>
    <name type="ordered locus">EC55989_0213</name>
</gene>
<protein>
    <recommendedName>
        <fullName evidence="1">Ribonuclease H</fullName>
        <shortName evidence="1">RNase H</shortName>
        <ecNumber evidence="1">3.1.26.4</ecNumber>
    </recommendedName>
</protein>
<sequence length="155" mass="17570">MLKQVEIFTDGSCLGNPGPGGYGAILRYRGREKTFSAGYTRTTNNRMELMAAIVALEALKEHCEVILSTDSQYVRQGITQWIHSWKKRGWKTADKKPVKNVDLWQRLDAALGQHQIKWEWVKGHAGHPENERCDELARAAAMNPTLEDTGYQVEV</sequence>
<evidence type="ECO:0000255" key="1">
    <source>
        <dbReference type="HAMAP-Rule" id="MF_00042"/>
    </source>
</evidence>
<evidence type="ECO:0000255" key="2">
    <source>
        <dbReference type="PROSITE-ProRule" id="PRU00408"/>
    </source>
</evidence>
<feature type="chain" id="PRO_1000194432" description="Ribonuclease H">
    <location>
        <begin position="1"/>
        <end position="155"/>
    </location>
</feature>
<feature type="domain" description="RNase H type-1" evidence="2">
    <location>
        <begin position="1"/>
        <end position="142"/>
    </location>
</feature>
<feature type="binding site" evidence="1">
    <location>
        <position position="10"/>
    </location>
    <ligand>
        <name>Mg(2+)</name>
        <dbReference type="ChEBI" id="CHEBI:18420"/>
        <label>1</label>
    </ligand>
</feature>
<feature type="binding site" evidence="1">
    <location>
        <position position="10"/>
    </location>
    <ligand>
        <name>Mg(2+)</name>
        <dbReference type="ChEBI" id="CHEBI:18420"/>
        <label>2</label>
    </ligand>
</feature>
<feature type="binding site" evidence="1">
    <location>
        <position position="48"/>
    </location>
    <ligand>
        <name>Mg(2+)</name>
        <dbReference type="ChEBI" id="CHEBI:18420"/>
        <label>1</label>
    </ligand>
</feature>
<feature type="binding site" evidence="1">
    <location>
        <position position="70"/>
    </location>
    <ligand>
        <name>Mg(2+)</name>
        <dbReference type="ChEBI" id="CHEBI:18420"/>
        <label>1</label>
    </ligand>
</feature>
<feature type="binding site" evidence="1">
    <location>
        <position position="134"/>
    </location>
    <ligand>
        <name>Mg(2+)</name>
        <dbReference type="ChEBI" id="CHEBI:18420"/>
        <label>2</label>
    </ligand>
</feature>
<proteinExistence type="inferred from homology"/>
<reference key="1">
    <citation type="journal article" date="2009" name="PLoS Genet.">
        <title>Organised genome dynamics in the Escherichia coli species results in highly diverse adaptive paths.</title>
        <authorList>
            <person name="Touchon M."/>
            <person name="Hoede C."/>
            <person name="Tenaillon O."/>
            <person name="Barbe V."/>
            <person name="Baeriswyl S."/>
            <person name="Bidet P."/>
            <person name="Bingen E."/>
            <person name="Bonacorsi S."/>
            <person name="Bouchier C."/>
            <person name="Bouvet O."/>
            <person name="Calteau A."/>
            <person name="Chiapello H."/>
            <person name="Clermont O."/>
            <person name="Cruveiller S."/>
            <person name="Danchin A."/>
            <person name="Diard M."/>
            <person name="Dossat C."/>
            <person name="Karoui M.E."/>
            <person name="Frapy E."/>
            <person name="Garry L."/>
            <person name="Ghigo J.M."/>
            <person name="Gilles A.M."/>
            <person name="Johnson J."/>
            <person name="Le Bouguenec C."/>
            <person name="Lescat M."/>
            <person name="Mangenot S."/>
            <person name="Martinez-Jehanne V."/>
            <person name="Matic I."/>
            <person name="Nassif X."/>
            <person name="Oztas S."/>
            <person name="Petit M.A."/>
            <person name="Pichon C."/>
            <person name="Rouy Z."/>
            <person name="Ruf C.S."/>
            <person name="Schneider D."/>
            <person name="Tourret J."/>
            <person name="Vacherie B."/>
            <person name="Vallenet D."/>
            <person name="Medigue C."/>
            <person name="Rocha E.P.C."/>
            <person name="Denamur E."/>
        </authorList>
    </citation>
    <scope>NUCLEOTIDE SEQUENCE [LARGE SCALE GENOMIC DNA]</scope>
    <source>
        <strain>55989 / EAEC</strain>
    </source>
</reference>
<keyword id="KW-0963">Cytoplasm</keyword>
<keyword id="KW-0255">Endonuclease</keyword>
<keyword id="KW-0378">Hydrolase</keyword>
<keyword id="KW-0460">Magnesium</keyword>
<keyword id="KW-0479">Metal-binding</keyword>
<keyword id="KW-0540">Nuclease</keyword>
<keyword id="KW-1185">Reference proteome</keyword>
<accession>B7LHC0</accession>
<comment type="function">
    <text evidence="1">Endonuclease that specifically degrades the RNA of RNA-DNA hybrids.</text>
</comment>
<comment type="catalytic activity">
    <reaction evidence="1">
        <text>Endonucleolytic cleavage to 5'-phosphomonoester.</text>
        <dbReference type="EC" id="3.1.26.4"/>
    </reaction>
</comment>
<comment type="cofactor">
    <cofactor evidence="1">
        <name>Mg(2+)</name>
        <dbReference type="ChEBI" id="CHEBI:18420"/>
    </cofactor>
    <text evidence="1">Binds 1 Mg(2+) ion per subunit. May bind a second metal ion at a regulatory site, or after substrate binding.</text>
</comment>
<comment type="subunit">
    <text evidence="1">Monomer.</text>
</comment>
<comment type="subcellular location">
    <subcellularLocation>
        <location evidence="1">Cytoplasm</location>
    </subcellularLocation>
</comment>
<comment type="similarity">
    <text evidence="1">Belongs to the RNase H family.</text>
</comment>